<name>CF107_BOVIN</name>
<comment type="function">
    <text evidence="3">Microtubule inner protein (MIP) part of the dynein-decorated doublet microtubules (DMTs) in cilia axoneme, which is required for motile cilia beating.</text>
</comment>
<comment type="subunit">
    <text evidence="4">Microtubule inner protein component of sperm flagellar doublet microtubules.</text>
</comment>
<comment type="subcellular location">
    <subcellularLocation>
        <location evidence="3">Cytoplasm</location>
        <location evidence="3">Cytoskeleton</location>
        <location evidence="3">Cilium axoneme</location>
    </subcellularLocation>
    <subcellularLocation>
        <location evidence="4">Cytoplasm</location>
        <location evidence="4">Cytoskeleton</location>
        <location evidence="4">Flagellum axoneme</location>
    </subcellularLocation>
</comment>
<comment type="tissue specificity">
    <text evidence="3">Expressed in trachea multiciliated cells.</text>
</comment>
<evidence type="ECO:0000250" key="1">
    <source>
        <dbReference type="UniProtKB" id="Q8N1D5"/>
    </source>
</evidence>
<evidence type="ECO:0000256" key="2">
    <source>
        <dbReference type="SAM" id="MobiDB-lite"/>
    </source>
</evidence>
<evidence type="ECO:0000269" key="3">
    <source>
    </source>
</evidence>
<evidence type="ECO:0000269" key="4">
    <source>
    </source>
</evidence>
<evidence type="ECO:0007744" key="5">
    <source>
        <dbReference type="PDB" id="7RRO"/>
    </source>
</evidence>
<evidence type="ECO:0007744" key="6">
    <source>
        <dbReference type="PDB" id="8OTZ"/>
    </source>
</evidence>
<organism>
    <name type="scientific">Bos taurus</name>
    <name type="common">Bovine</name>
    <dbReference type="NCBI Taxonomy" id="9913"/>
    <lineage>
        <taxon>Eukaryota</taxon>
        <taxon>Metazoa</taxon>
        <taxon>Chordata</taxon>
        <taxon>Craniata</taxon>
        <taxon>Vertebrata</taxon>
        <taxon>Euteleostomi</taxon>
        <taxon>Mammalia</taxon>
        <taxon>Eutheria</taxon>
        <taxon>Laurasiatheria</taxon>
        <taxon>Artiodactyla</taxon>
        <taxon>Ruminantia</taxon>
        <taxon>Pecora</taxon>
        <taxon>Bovidae</taxon>
        <taxon>Bovinae</taxon>
        <taxon>Bos</taxon>
    </lineage>
</organism>
<feature type="chain" id="PRO_0000247259" description="Cilia- and flagella-associated protein 107">
    <location>
        <begin position="1"/>
        <end position="196"/>
    </location>
</feature>
<feature type="region of interest" description="Mn 1" evidence="1">
    <location>
        <begin position="46"/>
        <end position="61"/>
    </location>
</feature>
<feature type="region of interest" description="Mn 2" evidence="1">
    <location>
        <begin position="96"/>
        <end position="108"/>
    </location>
</feature>
<feature type="region of interest" description="Disordered" evidence="2">
    <location>
        <begin position="168"/>
        <end position="196"/>
    </location>
</feature>
<feature type="compositionally biased region" description="Pro residues" evidence="2">
    <location>
        <begin position="184"/>
        <end position="196"/>
    </location>
</feature>
<proteinExistence type="evidence at protein level"/>
<dbReference type="EMBL" id="BC111174">
    <property type="protein sequence ID" value="AAI11175.1"/>
    <property type="molecule type" value="mRNA"/>
</dbReference>
<dbReference type="RefSeq" id="NP_001033296.1">
    <property type="nucleotide sequence ID" value="NM_001038207.2"/>
</dbReference>
<dbReference type="PDB" id="7RRO">
    <property type="method" value="EM"/>
    <property type="resolution" value="3.40 A"/>
    <property type="chains" value="8/9=1-196"/>
</dbReference>
<dbReference type="PDB" id="8OTZ">
    <property type="method" value="EM"/>
    <property type="resolution" value="3.60 A"/>
    <property type="chains" value="BW/BX=1-196"/>
</dbReference>
<dbReference type="PDB" id="9CPB">
    <property type="method" value="EM"/>
    <property type="resolution" value="3.52 A"/>
    <property type="chains" value="1K/1L=1-196"/>
</dbReference>
<dbReference type="PDBsum" id="7RRO"/>
<dbReference type="PDBsum" id="8OTZ"/>
<dbReference type="PDBsum" id="9CPB"/>
<dbReference type="EMDB" id="EMD-17187"/>
<dbReference type="EMDB" id="EMD-24664"/>
<dbReference type="EMDB" id="EMD-45801"/>
<dbReference type="EMDB" id="EMD-50664"/>
<dbReference type="SMR" id="Q2TA11"/>
<dbReference type="FunCoup" id="Q2TA11">
    <property type="interactions" value="37"/>
</dbReference>
<dbReference type="STRING" id="9913.ENSBTAP00000051842"/>
<dbReference type="PaxDb" id="9913-ENSBTAP00000051842"/>
<dbReference type="Ensembl" id="ENSBTAT00000055912.4">
    <property type="protein sequence ID" value="ENSBTAP00000051842.2"/>
    <property type="gene ID" value="ENSBTAG00000012158.7"/>
</dbReference>
<dbReference type="GeneID" id="615316"/>
<dbReference type="KEGG" id="bta:615316"/>
<dbReference type="CTD" id="93190"/>
<dbReference type="VEuPathDB" id="HostDB:ENSBTAG00000012158"/>
<dbReference type="VGNC" id="VGNC:52642">
    <property type="gene designation" value="CFAP107"/>
</dbReference>
<dbReference type="eggNOG" id="ENOG502RZRC">
    <property type="taxonomic scope" value="Eukaryota"/>
</dbReference>
<dbReference type="GeneTree" id="ENSGT00390000014553"/>
<dbReference type="HOGENOM" id="CLU_100733_1_0_1"/>
<dbReference type="InParanoid" id="Q2TA11"/>
<dbReference type="OMA" id="EKTPQCI"/>
<dbReference type="OrthoDB" id="8185227at2759"/>
<dbReference type="TreeFam" id="TF328903"/>
<dbReference type="Proteomes" id="UP000009136">
    <property type="component" value="Chromosome 16"/>
</dbReference>
<dbReference type="Bgee" id="ENSBTAG00000012158">
    <property type="expression patterns" value="Expressed in semen and 29 other cell types or tissues"/>
</dbReference>
<dbReference type="GO" id="GO:0160111">
    <property type="term" value="C:axonemal A tubule inner sheath"/>
    <property type="evidence" value="ECO:0000250"/>
    <property type="project" value="UniProtKB"/>
</dbReference>
<dbReference type="GO" id="GO:0005879">
    <property type="term" value="C:axonemal microtubule"/>
    <property type="evidence" value="ECO:0000314"/>
    <property type="project" value="UniProtKB"/>
</dbReference>
<dbReference type="GO" id="GO:0036126">
    <property type="term" value="C:sperm flagellum"/>
    <property type="evidence" value="ECO:0000250"/>
    <property type="project" value="UniProtKB"/>
</dbReference>
<dbReference type="GO" id="GO:0030317">
    <property type="term" value="P:flagellated sperm motility"/>
    <property type="evidence" value="ECO:0000250"/>
    <property type="project" value="UniProtKB"/>
</dbReference>
<dbReference type="InterPro" id="IPR054709">
    <property type="entry name" value="CFAP107"/>
</dbReference>
<dbReference type="InterPro" id="IPR037662">
    <property type="entry name" value="CFAP68/107"/>
</dbReference>
<dbReference type="PANTHER" id="PTHR31180:SF2">
    <property type="entry name" value="CILIA- AND FLAGELLA-ASSOCIATED PROTEIN 107"/>
    <property type="match status" value="1"/>
</dbReference>
<dbReference type="PANTHER" id="PTHR31180">
    <property type="entry name" value="CILIA- AND FLAGELLA-ASSOCIATED PROTEIN 107-RELATED"/>
    <property type="match status" value="1"/>
</dbReference>
<dbReference type="Pfam" id="PF22595">
    <property type="entry name" value="CFAP107"/>
    <property type="match status" value="1"/>
</dbReference>
<sequence>MQFLTAVSPQSSSTPSWKIETKYSTRVLTGNWTEERRKFIKATEKTPQTIYRKEYVPFPGHRPDQISRWYSKRTVEGLPYKYLITHHQEPSQRYLISTYDDHYNRHNYHPGLPELRTWNRHKLLWLPEKADFPLLGPPTNYGLYEQLKQKWLPPPEATLRESIYTSSYPRPPAGAMSRREHAIPVPPPRLQPVPHF</sequence>
<reference key="1">
    <citation type="submission" date="2005-12" db="EMBL/GenBank/DDBJ databases">
        <authorList>
            <consortium name="NIH - Mammalian Gene Collection (MGC) project"/>
        </authorList>
    </citation>
    <scope>NUCLEOTIDE SEQUENCE [LARGE SCALE MRNA]</scope>
    <source>
        <strain>Crossbred X Angus</strain>
        <tissue>Liver</tissue>
    </source>
</reference>
<reference evidence="5" key="2">
    <citation type="journal article" date="2021" name="Cell">
        <title>De novo identification of mammalian ciliary motility proteins using cryo-EM.</title>
        <authorList>
            <person name="Gui M."/>
            <person name="Farley H."/>
            <person name="Anujan P."/>
            <person name="Anderson J.R."/>
            <person name="Maxwell D.W."/>
            <person name="Whitchurch J.B."/>
            <person name="Botsch J.J."/>
            <person name="Qiu T."/>
            <person name="Meleppattu S."/>
            <person name="Singh S.K."/>
            <person name="Zhang Q."/>
            <person name="Thompson J."/>
            <person name="Lucas J.S."/>
            <person name="Bingle C.D."/>
            <person name="Norris D.P."/>
            <person name="Roy S."/>
            <person name="Brown A."/>
        </authorList>
    </citation>
    <scope>STRUCTURE BY ELECTRON MICROSCOPY (3.40 ANGSTROMS)</scope>
    <scope>FUNCTION</scope>
    <scope>TISSUE SPECIFICITY</scope>
    <scope>SUBCELLULAR LOCATION</scope>
</reference>
<reference evidence="6" key="3">
    <citation type="journal article" date="2023" name="Cell">
        <title>Structural specializations of the sperm tail.</title>
        <authorList>
            <person name="Leung M.R."/>
            <person name="Zeng J."/>
            <person name="Wang X."/>
            <person name="Roelofs M.C."/>
            <person name="Huang W."/>
            <person name="Zenezini Chiozzi R."/>
            <person name="Hevler J.F."/>
            <person name="Heck A.J.R."/>
            <person name="Dutcher S.K."/>
            <person name="Brown A."/>
            <person name="Zhang R."/>
            <person name="Zeev-Ben-Mordehai T."/>
        </authorList>
    </citation>
    <scope>STRUCTURE BY ELECTRON MICROSCOPY (3.60 ANGSTROMS)</scope>
    <scope>SUBUNIT</scope>
    <scope>SUBCELLULAR LOCATION</scope>
</reference>
<gene>
    <name evidence="1" type="primary">CFAP107</name>
</gene>
<keyword id="KW-0002">3D-structure</keyword>
<keyword id="KW-0966">Cell projection</keyword>
<keyword id="KW-0969">Cilium</keyword>
<keyword id="KW-0963">Cytoplasm</keyword>
<keyword id="KW-0206">Cytoskeleton</keyword>
<keyword id="KW-0282">Flagellum</keyword>
<keyword id="KW-1185">Reference proteome</keyword>
<accession>Q2TA11</accession>
<protein>
    <recommendedName>
        <fullName evidence="1">Cilia- and flagella-associated protein 107</fullName>
    </recommendedName>
</protein>